<keyword id="KW-0378">Hydrolase</keyword>
<keyword id="KW-0904">Protein phosphatase</keyword>
<evidence type="ECO:0000250" key="1"/>
<evidence type="ECO:0000255" key="2">
    <source>
        <dbReference type="PROSITE-ProRule" id="PRU00160"/>
    </source>
</evidence>
<evidence type="ECO:0000255" key="3">
    <source>
        <dbReference type="PROSITE-ProRule" id="PRU10044"/>
    </source>
</evidence>
<evidence type="ECO:0000305" key="4"/>
<comment type="catalytic activity">
    <reaction evidence="3">
        <text>O-phospho-L-tyrosyl-[protein] + H2O = L-tyrosyl-[protein] + phosphate</text>
        <dbReference type="Rhea" id="RHEA:10684"/>
        <dbReference type="Rhea" id="RHEA-COMP:10136"/>
        <dbReference type="Rhea" id="RHEA-COMP:20101"/>
        <dbReference type="ChEBI" id="CHEBI:15377"/>
        <dbReference type="ChEBI" id="CHEBI:43474"/>
        <dbReference type="ChEBI" id="CHEBI:46858"/>
        <dbReference type="ChEBI" id="CHEBI:61978"/>
        <dbReference type="EC" id="3.1.3.48"/>
    </reaction>
</comment>
<comment type="similarity">
    <text evidence="4">Belongs to the protein-tyrosine phosphatase family.</text>
</comment>
<proteinExistence type="evidence at transcript level"/>
<sequence length="117" mass="13422">WLMIIEQKCNIIVMLAECVEAGKPKCHKYWPNDNMEETYGIVSVTNKEEIKYCGFTRRILLVSAKLKDGSVLTTVTQYHFTKWPDHGVPQTTSAIIRMHREIMKANKDLIGQSPIVV</sequence>
<organism>
    <name type="scientific">Styela plicata</name>
    <name type="common">Wrinkled sea squirt</name>
    <name type="synonym">Ascidia plicata</name>
    <dbReference type="NCBI Taxonomy" id="7726"/>
    <lineage>
        <taxon>Eukaryota</taxon>
        <taxon>Metazoa</taxon>
        <taxon>Chordata</taxon>
        <taxon>Tunicata</taxon>
        <taxon>Ascidiacea</taxon>
        <taxon>Stolidobranchia</taxon>
        <taxon>Styelidae</taxon>
        <taxon>Styela</taxon>
    </lineage>
</organism>
<dbReference type="EC" id="3.1.3.48"/>
<dbReference type="EMBL" id="M38010">
    <property type="protein sequence ID" value="AAA29843.1"/>
    <property type="molecule type" value="mRNA"/>
</dbReference>
<dbReference type="SMR" id="P28217"/>
<dbReference type="GO" id="GO:0004725">
    <property type="term" value="F:protein tyrosine phosphatase activity"/>
    <property type="evidence" value="ECO:0007669"/>
    <property type="project" value="UniProtKB-EC"/>
</dbReference>
<dbReference type="CDD" id="cd00047">
    <property type="entry name" value="PTPc"/>
    <property type="match status" value="1"/>
</dbReference>
<dbReference type="Gene3D" id="3.90.190.10">
    <property type="entry name" value="Protein tyrosine phosphatase superfamily"/>
    <property type="match status" value="1"/>
</dbReference>
<dbReference type="InterPro" id="IPR029021">
    <property type="entry name" value="Prot-tyrosine_phosphatase-like"/>
</dbReference>
<dbReference type="InterPro" id="IPR050348">
    <property type="entry name" value="Protein-Tyr_Phosphatase"/>
</dbReference>
<dbReference type="InterPro" id="IPR000242">
    <property type="entry name" value="PTP_cat"/>
</dbReference>
<dbReference type="PANTHER" id="PTHR19134">
    <property type="entry name" value="RECEPTOR-TYPE TYROSINE-PROTEIN PHOSPHATASE"/>
    <property type="match status" value="1"/>
</dbReference>
<dbReference type="PANTHER" id="PTHR19134:SF449">
    <property type="entry name" value="TYROSINE-PROTEIN PHOSPHATASE 1"/>
    <property type="match status" value="1"/>
</dbReference>
<dbReference type="Pfam" id="PF00102">
    <property type="entry name" value="Y_phosphatase"/>
    <property type="match status" value="1"/>
</dbReference>
<dbReference type="SUPFAM" id="SSF52799">
    <property type="entry name" value="(Phosphotyrosine protein) phosphatases II"/>
    <property type="match status" value="1"/>
</dbReference>
<dbReference type="PROSITE" id="PS50055">
    <property type="entry name" value="TYR_PHOSPHATASE_PTP"/>
    <property type="match status" value="1"/>
</dbReference>
<gene>
    <name type="primary">STY-25</name>
</gene>
<reference key="1">
    <citation type="journal article" date="1991" name="Immunogenetics">
        <title>Protein tyrosine phosphatase domains from the protochordate Styela plicata.</title>
        <authorList>
            <person name="Matthews R.J."/>
            <person name="Flores E."/>
            <person name="Thomas M.L."/>
        </authorList>
    </citation>
    <scope>NUCLEOTIDE SEQUENCE [MRNA]</scope>
</reference>
<name>PTP25_STYPL</name>
<feature type="chain" id="PRO_0000094913" description="Tyrosine-protein phosphatase 25">
    <location>
        <begin position="1" status="less than"/>
        <end position="117" status="greater than"/>
    </location>
</feature>
<feature type="domain" description="Tyrosine-protein phosphatase" evidence="2">
    <location>
        <begin position="1" status="less than"/>
        <end position="117" status="greater than"/>
    </location>
</feature>
<feature type="binding site" evidence="1">
    <location>
        <position position="85"/>
    </location>
    <ligand>
        <name>substrate</name>
    </ligand>
</feature>
<feature type="non-terminal residue">
    <location>
        <position position="1"/>
    </location>
</feature>
<feature type="non-terminal residue">
    <location>
        <position position="117"/>
    </location>
</feature>
<accession>P28217</accession>
<protein>
    <recommendedName>
        <fullName>Tyrosine-protein phosphatase 25</fullName>
        <ecNumber>3.1.3.48</ecNumber>
    </recommendedName>
</protein>